<organism>
    <name type="scientific">Homo sapiens</name>
    <name type="common">Human</name>
    <dbReference type="NCBI Taxonomy" id="9606"/>
    <lineage>
        <taxon>Eukaryota</taxon>
        <taxon>Metazoa</taxon>
        <taxon>Chordata</taxon>
        <taxon>Craniata</taxon>
        <taxon>Vertebrata</taxon>
        <taxon>Euteleostomi</taxon>
        <taxon>Mammalia</taxon>
        <taxon>Eutheria</taxon>
        <taxon>Euarchontoglires</taxon>
        <taxon>Primates</taxon>
        <taxon>Haplorrhini</taxon>
        <taxon>Catarrhini</taxon>
        <taxon>Hominidae</taxon>
        <taxon>Homo</taxon>
    </lineage>
</organism>
<dbReference type="EC" id="7.6.2.1" evidence="15"/>
<dbReference type="EMBL" id="AF250238">
    <property type="protein sequence ID" value="AAF85794.1"/>
    <property type="molecule type" value="mRNA"/>
</dbReference>
<dbReference type="EMBL" id="AF311102">
    <property type="protein sequence ID" value="AAN04657.1"/>
    <property type="molecule type" value="Genomic_DNA"/>
</dbReference>
<dbReference type="EMBL" id="AF311058">
    <property type="protein sequence ID" value="AAN04657.1"/>
    <property type="status" value="JOINED"/>
    <property type="molecule type" value="Genomic_DNA"/>
</dbReference>
<dbReference type="EMBL" id="AF311059">
    <property type="protein sequence ID" value="AAN04657.1"/>
    <property type="status" value="JOINED"/>
    <property type="molecule type" value="Genomic_DNA"/>
</dbReference>
<dbReference type="EMBL" id="AF311060">
    <property type="protein sequence ID" value="AAN04657.1"/>
    <property type="status" value="JOINED"/>
    <property type="molecule type" value="Genomic_DNA"/>
</dbReference>
<dbReference type="EMBL" id="AF311061">
    <property type="protein sequence ID" value="AAN04657.1"/>
    <property type="status" value="JOINED"/>
    <property type="molecule type" value="Genomic_DNA"/>
</dbReference>
<dbReference type="EMBL" id="AF311062">
    <property type="protein sequence ID" value="AAN04657.1"/>
    <property type="status" value="JOINED"/>
    <property type="molecule type" value="Genomic_DNA"/>
</dbReference>
<dbReference type="EMBL" id="AF311063">
    <property type="protein sequence ID" value="AAN04657.1"/>
    <property type="status" value="JOINED"/>
    <property type="molecule type" value="Genomic_DNA"/>
</dbReference>
<dbReference type="EMBL" id="AF311064">
    <property type="protein sequence ID" value="AAN04657.1"/>
    <property type="status" value="JOINED"/>
    <property type="molecule type" value="Genomic_DNA"/>
</dbReference>
<dbReference type="EMBL" id="AF311065">
    <property type="protein sequence ID" value="AAN04657.1"/>
    <property type="status" value="JOINED"/>
    <property type="molecule type" value="Genomic_DNA"/>
</dbReference>
<dbReference type="EMBL" id="AF311066">
    <property type="protein sequence ID" value="AAN04657.1"/>
    <property type="status" value="JOINED"/>
    <property type="molecule type" value="Genomic_DNA"/>
</dbReference>
<dbReference type="EMBL" id="AF311067">
    <property type="protein sequence ID" value="AAN04657.1"/>
    <property type="status" value="JOINED"/>
    <property type="molecule type" value="Genomic_DNA"/>
</dbReference>
<dbReference type="EMBL" id="AF311068">
    <property type="protein sequence ID" value="AAN04657.1"/>
    <property type="status" value="JOINED"/>
    <property type="molecule type" value="Genomic_DNA"/>
</dbReference>
<dbReference type="EMBL" id="AF311057">
    <property type="protein sequence ID" value="AAN04657.1"/>
    <property type="status" value="JOINED"/>
    <property type="molecule type" value="Genomic_DNA"/>
</dbReference>
<dbReference type="EMBL" id="AF311069">
    <property type="protein sequence ID" value="AAN04657.1"/>
    <property type="status" value="JOINED"/>
    <property type="molecule type" value="Genomic_DNA"/>
</dbReference>
<dbReference type="EMBL" id="AF311070">
    <property type="protein sequence ID" value="AAN04657.1"/>
    <property type="status" value="JOINED"/>
    <property type="molecule type" value="Genomic_DNA"/>
</dbReference>
<dbReference type="EMBL" id="AF311071">
    <property type="protein sequence ID" value="AAN04657.1"/>
    <property type="status" value="JOINED"/>
    <property type="molecule type" value="Genomic_DNA"/>
</dbReference>
<dbReference type="EMBL" id="AF311072">
    <property type="protein sequence ID" value="AAN04657.1"/>
    <property type="status" value="JOINED"/>
    <property type="molecule type" value="Genomic_DNA"/>
</dbReference>
<dbReference type="EMBL" id="AF311073">
    <property type="protein sequence ID" value="AAN04657.1"/>
    <property type="status" value="JOINED"/>
    <property type="molecule type" value="Genomic_DNA"/>
</dbReference>
<dbReference type="EMBL" id="AF311074">
    <property type="protein sequence ID" value="AAN04657.1"/>
    <property type="status" value="JOINED"/>
    <property type="molecule type" value="Genomic_DNA"/>
</dbReference>
<dbReference type="EMBL" id="AF311075">
    <property type="protein sequence ID" value="AAN04657.1"/>
    <property type="status" value="JOINED"/>
    <property type="molecule type" value="Genomic_DNA"/>
</dbReference>
<dbReference type="EMBL" id="AF311076">
    <property type="protein sequence ID" value="AAN04657.1"/>
    <property type="status" value="JOINED"/>
    <property type="molecule type" value="Genomic_DNA"/>
</dbReference>
<dbReference type="EMBL" id="AF311077">
    <property type="protein sequence ID" value="AAN04657.1"/>
    <property type="status" value="JOINED"/>
    <property type="molecule type" value="Genomic_DNA"/>
</dbReference>
<dbReference type="EMBL" id="AF311078">
    <property type="protein sequence ID" value="AAN04657.1"/>
    <property type="status" value="JOINED"/>
    <property type="molecule type" value="Genomic_DNA"/>
</dbReference>
<dbReference type="EMBL" id="AF311079">
    <property type="protein sequence ID" value="AAN04657.1"/>
    <property type="status" value="JOINED"/>
    <property type="molecule type" value="Genomic_DNA"/>
</dbReference>
<dbReference type="EMBL" id="AF311080">
    <property type="protein sequence ID" value="AAN04657.1"/>
    <property type="status" value="JOINED"/>
    <property type="molecule type" value="Genomic_DNA"/>
</dbReference>
<dbReference type="EMBL" id="AF311081">
    <property type="protein sequence ID" value="AAN04657.1"/>
    <property type="status" value="JOINED"/>
    <property type="molecule type" value="Genomic_DNA"/>
</dbReference>
<dbReference type="EMBL" id="AF311082">
    <property type="protein sequence ID" value="AAN04657.1"/>
    <property type="status" value="JOINED"/>
    <property type="molecule type" value="Genomic_DNA"/>
</dbReference>
<dbReference type="EMBL" id="AF311083">
    <property type="protein sequence ID" value="AAN04657.1"/>
    <property type="status" value="JOINED"/>
    <property type="molecule type" value="Genomic_DNA"/>
</dbReference>
<dbReference type="EMBL" id="AF311084">
    <property type="protein sequence ID" value="AAN04657.1"/>
    <property type="status" value="JOINED"/>
    <property type="molecule type" value="Genomic_DNA"/>
</dbReference>
<dbReference type="EMBL" id="AF311085">
    <property type="protein sequence ID" value="AAN04657.1"/>
    <property type="status" value="JOINED"/>
    <property type="molecule type" value="Genomic_DNA"/>
</dbReference>
<dbReference type="EMBL" id="AF311086">
    <property type="protein sequence ID" value="AAN04657.1"/>
    <property type="status" value="JOINED"/>
    <property type="molecule type" value="Genomic_DNA"/>
</dbReference>
<dbReference type="EMBL" id="AF311087">
    <property type="protein sequence ID" value="AAN04657.1"/>
    <property type="status" value="JOINED"/>
    <property type="molecule type" value="Genomic_DNA"/>
</dbReference>
<dbReference type="EMBL" id="AF311088">
    <property type="protein sequence ID" value="AAN04657.1"/>
    <property type="status" value="JOINED"/>
    <property type="molecule type" value="Genomic_DNA"/>
</dbReference>
<dbReference type="EMBL" id="AF311089">
    <property type="protein sequence ID" value="AAN04657.1"/>
    <property type="status" value="JOINED"/>
    <property type="molecule type" value="Genomic_DNA"/>
</dbReference>
<dbReference type="EMBL" id="AF311090">
    <property type="protein sequence ID" value="AAN04657.1"/>
    <property type="status" value="JOINED"/>
    <property type="molecule type" value="Genomic_DNA"/>
</dbReference>
<dbReference type="EMBL" id="AF311091">
    <property type="protein sequence ID" value="AAN04657.1"/>
    <property type="status" value="JOINED"/>
    <property type="molecule type" value="Genomic_DNA"/>
</dbReference>
<dbReference type="EMBL" id="AF311092">
    <property type="protein sequence ID" value="AAN04657.1"/>
    <property type="status" value="JOINED"/>
    <property type="molecule type" value="Genomic_DNA"/>
</dbReference>
<dbReference type="EMBL" id="AF311093">
    <property type="protein sequence ID" value="AAN04657.1"/>
    <property type="status" value="JOINED"/>
    <property type="molecule type" value="Genomic_DNA"/>
</dbReference>
<dbReference type="EMBL" id="AF311094">
    <property type="protein sequence ID" value="AAN04657.1"/>
    <property type="status" value="JOINED"/>
    <property type="molecule type" value="Genomic_DNA"/>
</dbReference>
<dbReference type="EMBL" id="AF311095">
    <property type="protein sequence ID" value="AAN04657.1"/>
    <property type="status" value="JOINED"/>
    <property type="molecule type" value="Genomic_DNA"/>
</dbReference>
<dbReference type="EMBL" id="AF311096">
    <property type="protein sequence ID" value="AAN04657.1"/>
    <property type="status" value="JOINED"/>
    <property type="molecule type" value="Genomic_DNA"/>
</dbReference>
<dbReference type="EMBL" id="AF311097">
    <property type="protein sequence ID" value="AAN04657.1"/>
    <property type="status" value="JOINED"/>
    <property type="molecule type" value="Genomic_DNA"/>
</dbReference>
<dbReference type="EMBL" id="AF311098">
    <property type="protein sequence ID" value="AAN04657.1"/>
    <property type="status" value="JOINED"/>
    <property type="molecule type" value="Genomic_DNA"/>
</dbReference>
<dbReference type="EMBL" id="AF311099">
    <property type="protein sequence ID" value="AAN04657.1"/>
    <property type="status" value="JOINED"/>
    <property type="molecule type" value="Genomic_DNA"/>
</dbReference>
<dbReference type="EMBL" id="AF311100">
    <property type="protein sequence ID" value="AAN04657.1"/>
    <property type="status" value="JOINED"/>
    <property type="molecule type" value="Genomic_DNA"/>
</dbReference>
<dbReference type="EMBL" id="AF311101">
    <property type="protein sequence ID" value="AAN04657.1"/>
    <property type="status" value="JOINED"/>
    <property type="molecule type" value="Genomic_DNA"/>
</dbReference>
<dbReference type="EMBL" id="AB055390">
    <property type="protein sequence ID" value="BAB62294.1"/>
    <property type="molecule type" value="mRNA"/>
</dbReference>
<dbReference type="EMBL" id="AF328787">
    <property type="protein sequence ID" value="AAK00959.1"/>
    <property type="molecule type" value="mRNA"/>
</dbReference>
<dbReference type="EMBL" id="AC011558">
    <property type="status" value="NOT_ANNOTATED_CDS"/>
    <property type="molecule type" value="Genomic_DNA"/>
</dbReference>
<dbReference type="EMBL" id="AF140342">
    <property type="protein sequence ID" value="AAF06727.1"/>
    <property type="molecule type" value="mRNA"/>
</dbReference>
<dbReference type="CCDS" id="CCDS12055.1">
    <molecule id="Q8IZY2-1"/>
</dbReference>
<dbReference type="RefSeq" id="NP_061985.2">
    <molecule id="Q8IZY2-1"/>
    <property type="nucleotide sequence ID" value="NM_019112.4"/>
</dbReference>
<dbReference type="RefSeq" id="XP_011525930.1">
    <property type="nucleotide sequence ID" value="XM_011527628.2"/>
</dbReference>
<dbReference type="RefSeq" id="XP_047294000.1">
    <molecule id="Q8IZY2-1"/>
    <property type="nucleotide sequence ID" value="XM_047438044.1"/>
</dbReference>
<dbReference type="PDB" id="8EDW">
    <property type="method" value="EM"/>
    <property type="resolution" value="3.60 A"/>
    <property type="chains" value="A=1-2146"/>
</dbReference>
<dbReference type="PDB" id="8EE6">
    <property type="method" value="EM"/>
    <property type="resolution" value="4.00 A"/>
    <property type="chains" value="A=1-2146"/>
</dbReference>
<dbReference type="PDB" id="8EEB">
    <property type="method" value="EM"/>
    <property type="resolution" value="3.90 A"/>
    <property type="chains" value="A=1-2146"/>
</dbReference>
<dbReference type="PDB" id="8EOP">
    <property type="method" value="EM"/>
    <property type="resolution" value="3.70 A"/>
    <property type="chains" value="A=1-2146"/>
</dbReference>
<dbReference type="PDB" id="8Y1O">
    <property type="method" value="EM"/>
    <property type="resolution" value="3.92 A"/>
    <property type="chains" value="A=1-2146"/>
</dbReference>
<dbReference type="PDB" id="8Y1P">
    <property type="method" value="EM"/>
    <property type="resolution" value="3.45 A"/>
    <property type="chains" value="A=1-2146"/>
</dbReference>
<dbReference type="PDBsum" id="8EDW"/>
<dbReference type="PDBsum" id="8EE6"/>
<dbReference type="PDBsum" id="8EEB"/>
<dbReference type="PDBsum" id="8EOP"/>
<dbReference type="PDBsum" id="8Y1O"/>
<dbReference type="PDBsum" id="8Y1P"/>
<dbReference type="EMDB" id="EMD-28041"/>
<dbReference type="EMDB" id="EMD-28047"/>
<dbReference type="EMDB" id="EMD-28050"/>
<dbReference type="EMDB" id="EMD-28451"/>
<dbReference type="EMDB" id="EMD-38841"/>
<dbReference type="EMDB" id="EMD-38842"/>
<dbReference type="SMR" id="Q8IZY2"/>
<dbReference type="BioGRID" id="115629">
    <property type="interactions" value="24"/>
</dbReference>
<dbReference type="FunCoup" id="Q8IZY2">
    <property type="interactions" value="325"/>
</dbReference>
<dbReference type="IntAct" id="Q8IZY2">
    <property type="interactions" value="21"/>
</dbReference>
<dbReference type="MINT" id="Q8IZY2"/>
<dbReference type="STRING" id="9606.ENSP00000263094"/>
<dbReference type="SwissLipids" id="SLP:000000346"/>
<dbReference type="TCDB" id="3.A.1.211.10">
    <property type="family name" value="the atp-binding cassette (abc) superfamily"/>
</dbReference>
<dbReference type="GlyConnect" id="1022">
    <property type="glycosylation" value="1 N-Linked glycan (1 site)"/>
</dbReference>
<dbReference type="GlyCosmos" id="Q8IZY2">
    <property type="glycosylation" value="3 sites, 2 glycans"/>
</dbReference>
<dbReference type="GlyGen" id="Q8IZY2">
    <property type="glycosylation" value="10 sites, 4 N-linked glycans (6 sites), 1 O-linked glycan (1 site)"/>
</dbReference>
<dbReference type="iPTMnet" id="Q8IZY2"/>
<dbReference type="PhosphoSitePlus" id="Q8IZY2"/>
<dbReference type="SwissPalm" id="Q8IZY2"/>
<dbReference type="BioMuta" id="ABCA7"/>
<dbReference type="DMDM" id="161784300"/>
<dbReference type="jPOST" id="Q8IZY2"/>
<dbReference type="MassIVE" id="Q8IZY2"/>
<dbReference type="PaxDb" id="9606-ENSP00000263094"/>
<dbReference type="PeptideAtlas" id="Q8IZY2"/>
<dbReference type="ProteomicsDB" id="71441">
    <molecule id="Q8IZY2-1"/>
</dbReference>
<dbReference type="ProteomicsDB" id="71442">
    <molecule id="Q8IZY2-2"/>
</dbReference>
<dbReference type="Antibodypedia" id="22516">
    <property type="antibodies" value="184 antibodies from 31 providers"/>
</dbReference>
<dbReference type="DNASU" id="10347"/>
<dbReference type="Ensembl" id="ENST00000263094.11">
    <molecule id="Q8IZY2-1"/>
    <property type="protein sequence ID" value="ENSP00000263094.6"/>
    <property type="gene ID" value="ENSG00000064687.13"/>
</dbReference>
<dbReference type="GeneID" id="10347"/>
<dbReference type="KEGG" id="hsa:10347"/>
<dbReference type="MANE-Select" id="ENST00000263094.11">
    <property type="protein sequence ID" value="ENSP00000263094.6"/>
    <property type="RefSeq nucleotide sequence ID" value="NM_019112.4"/>
    <property type="RefSeq protein sequence ID" value="NP_061985.2"/>
</dbReference>
<dbReference type="UCSC" id="uc002lqw.5">
    <molecule id="Q8IZY2-1"/>
    <property type="organism name" value="human"/>
</dbReference>
<dbReference type="AGR" id="HGNC:37"/>
<dbReference type="CTD" id="10347"/>
<dbReference type="DisGeNET" id="10347"/>
<dbReference type="GeneCards" id="ABCA7"/>
<dbReference type="HGNC" id="HGNC:37">
    <property type="gene designation" value="ABCA7"/>
</dbReference>
<dbReference type="HPA" id="ENSG00000064687">
    <property type="expression patterns" value="Tissue enhanced (pituitary)"/>
</dbReference>
<dbReference type="MalaCards" id="ABCA7"/>
<dbReference type="MIM" id="605414">
    <property type="type" value="gene"/>
</dbReference>
<dbReference type="MIM" id="608907">
    <property type="type" value="phenotype"/>
</dbReference>
<dbReference type="neXtProt" id="NX_Q8IZY2"/>
<dbReference type="NIAGADS" id="ENSG00000064687"/>
<dbReference type="OpenTargets" id="ENSG00000064687"/>
<dbReference type="Orphanet" id="1020">
    <property type="disease" value="Early-onset autosomal dominant Alzheimer disease"/>
</dbReference>
<dbReference type="PharmGKB" id="PA24382"/>
<dbReference type="VEuPathDB" id="HostDB:ENSG00000064687"/>
<dbReference type="eggNOG" id="KOG0059">
    <property type="taxonomic scope" value="Eukaryota"/>
</dbReference>
<dbReference type="GeneTree" id="ENSGT00940000161439"/>
<dbReference type="HOGENOM" id="CLU_000604_19_0_1"/>
<dbReference type="InParanoid" id="Q8IZY2"/>
<dbReference type="OMA" id="LVSYIKF"/>
<dbReference type="OrthoDB" id="8061355at2759"/>
<dbReference type="PAN-GO" id="Q8IZY2">
    <property type="GO annotations" value="7 GO annotations based on evolutionary models"/>
</dbReference>
<dbReference type="PhylomeDB" id="Q8IZY2"/>
<dbReference type="TreeFam" id="TF105191"/>
<dbReference type="PathwayCommons" id="Q8IZY2"/>
<dbReference type="Reactome" id="R-HSA-1369062">
    <property type="pathway name" value="ABC transporters in lipid homeostasis"/>
</dbReference>
<dbReference type="SignaLink" id="Q8IZY2"/>
<dbReference type="SIGNOR" id="Q8IZY2"/>
<dbReference type="BioGRID-ORCS" id="10347">
    <property type="hits" value="22 hits in 1162 CRISPR screens"/>
</dbReference>
<dbReference type="ChiTaRS" id="ABCA7">
    <property type="organism name" value="human"/>
</dbReference>
<dbReference type="GeneWiki" id="ABCA7"/>
<dbReference type="GenomeRNAi" id="10347"/>
<dbReference type="Pharos" id="Q8IZY2">
    <property type="development level" value="Tbio"/>
</dbReference>
<dbReference type="PRO" id="PR:Q8IZY2"/>
<dbReference type="Proteomes" id="UP000005640">
    <property type="component" value="Chromosome 19"/>
</dbReference>
<dbReference type="RNAct" id="Q8IZY2">
    <property type="molecule type" value="protein"/>
</dbReference>
<dbReference type="Bgee" id="ENSG00000064687">
    <property type="expression patterns" value="Expressed in granulocyte and 145 other cell types or tissues"/>
</dbReference>
<dbReference type="ExpressionAtlas" id="Q8IZY2">
    <property type="expression patterns" value="baseline and differential"/>
</dbReference>
<dbReference type="GO" id="GO:0030054">
    <property type="term" value="C:cell junction"/>
    <property type="evidence" value="ECO:0000314"/>
    <property type="project" value="HPA"/>
</dbReference>
<dbReference type="GO" id="GO:0009986">
    <property type="term" value="C:cell surface"/>
    <property type="evidence" value="ECO:0000250"/>
    <property type="project" value="Alzheimers_University_of_Toronto"/>
</dbReference>
<dbReference type="GO" id="GO:0031901">
    <property type="term" value="C:early endosome membrane"/>
    <property type="evidence" value="ECO:0007669"/>
    <property type="project" value="UniProtKB-SubCell"/>
</dbReference>
<dbReference type="GO" id="GO:0005783">
    <property type="term" value="C:endoplasmic reticulum"/>
    <property type="evidence" value="ECO:0007669"/>
    <property type="project" value="UniProtKB-SubCell"/>
</dbReference>
<dbReference type="GO" id="GO:0097386">
    <property type="term" value="C:glial cell projection"/>
    <property type="evidence" value="ECO:0000250"/>
    <property type="project" value="UniProtKB"/>
</dbReference>
<dbReference type="GO" id="GO:0005794">
    <property type="term" value="C:Golgi apparatus"/>
    <property type="evidence" value="ECO:0000314"/>
    <property type="project" value="HPA"/>
</dbReference>
<dbReference type="GO" id="GO:0000139">
    <property type="term" value="C:Golgi membrane"/>
    <property type="evidence" value="ECO:0007669"/>
    <property type="project" value="UniProtKB-SubCell"/>
</dbReference>
<dbReference type="GO" id="GO:0043231">
    <property type="term" value="C:intracellular membrane-bounded organelle"/>
    <property type="evidence" value="ECO:0000318"/>
    <property type="project" value="GO_Central"/>
</dbReference>
<dbReference type="GO" id="GO:0001891">
    <property type="term" value="C:phagocytic cup"/>
    <property type="evidence" value="ECO:0000250"/>
    <property type="project" value="Alzheimers_University_of_Toronto"/>
</dbReference>
<dbReference type="GO" id="GO:0005886">
    <property type="term" value="C:plasma membrane"/>
    <property type="evidence" value="ECO:0000314"/>
    <property type="project" value="Alzheimers_University_of_Toronto"/>
</dbReference>
<dbReference type="GO" id="GO:0032587">
    <property type="term" value="C:ruffle membrane"/>
    <property type="evidence" value="ECO:0000250"/>
    <property type="project" value="Alzheimers_University_of_Toronto"/>
</dbReference>
<dbReference type="GO" id="GO:0140359">
    <property type="term" value="F:ABC-type transporter activity"/>
    <property type="evidence" value="ECO:0007669"/>
    <property type="project" value="InterPro"/>
</dbReference>
<dbReference type="GO" id="GO:0034188">
    <property type="term" value="F:apolipoprotein A-I receptor activity"/>
    <property type="evidence" value="ECO:0000314"/>
    <property type="project" value="Alzheimers_University_of_Toronto"/>
</dbReference>
<dbReference type="GO" id="GO:0005524">
    <property type="term" value="F:ATP binding"/>
    <property type="evidence" value="ECO:0007669"/>
    <property type="project" value="UniProtKB-KW"/>
</dbReference>
<dbReference type="GO" id="GO:0016887">
    <property type="term" value="F:ATP hydrolysis activity"/>
    <property type="evidence" value="ECO:0007669"/>
    <property type="project" value="InterPro"/>
</dbReference>
<dbReference type="GO" id="GO:0042626">
    <property type="term" value="F:ATPase-coupled transmembrane transporter activity"/>
    <property type="evidence" value="ECO:0000318"/>
    <property type="project" value="GO_Central"/>
</dbReference>
<dbReference type="GO" id="GO:0140328">
    <property type="term" value="F:floppase activity"/>
    <property type="evidence" value="ECO:0000314"/>
    <property type="project" value="UniProtKB"/>
</dbReference>
<dbReference type="GO" id="GO:0090554">
    <property type="term" value="F:phosphatidylcholine floppase activity"/>
    <property type="evidence" value="ECO:0000314"/>
    <property type="project" value="BHF-UCL"/>
</dbReference>
<dbReference type="GO" id="GO:0090556">
    <property type="term" value="F:phosphatidylserine floppase activity"/>
    <property type="evidence" value="ECO:0000314"/>
    <property type="project" value="BHF-UCL"/>
</dbReference>
<dbReference type="GO" id="GO:0005548">
    <property type="term" value="F:phospholipid transporter activity"/>
    <property type="evidence" value="ECO:0000316"/>
    <property type="project" value="ARUK-UCL"/>
</dbReference>
<dbReference type="GO" id="GO:0150094">
    <property type="term" value="P:amyloid-beta clearance by cellular catabolic process"/>
    <property type="evidence" value="ECO:0000250"/>
    <property type="project" value="UniProtKB"/>
</dbReference>
<dbReference type="GO" id="GO:0034205">
    <property type="term" value="P:amyloid-beta formation"/>
    <property type="evidence" value="ECO:0000315"/>
    <property type="project" value="UniProtKB"/>
</dbReference>
<dbReference type="GO" id="GO:0038027">
    <property type="term" value="P:apolipoprotein A-I-mediated signaling pathway"/>
    <property type="evidence" value="ECO:0000314"/>
    <property type="project" value="Alzheimers_University_of_Toronto"/>
</dbReference>
<dbReference type="GO" id="GO:0033344">
    <property type="term" value="P:cholesterol efflux"/>
    <property type="evidence" value="ECO:0000314"/>
    <property type="project" value="Alzheimers_University_of_Toronto"/>
</dbReference>
<dbReference type="GO" id="GO:0034380">
    <property type="term" value="P:high-density lipoprotein particle assembly"/>
    <property type="evidence" value="ECO:0000314"/>
    <property type="project" value="Alzheimers_University_of_Toronto"/>
</dbReference>
<dbReference type="GO" id="GO:0007613">
    <property type="term" value="P:memory"/>
    <property type="evidence" value="ECO:0000250"/>
    <property type="project" value="Alzheimers_University_of_Toronto"/>
</dbReference>
<dbReference type="GO" id="GO:0042985">
    <property type="term" value="P:negative regulation of amyloid precursor protein biosynthetic process"/>
    <property type="evidence" value="ECO:0000250"/>
    <property type="project" value="Alzheimers_University_of_Toronto"/>
</dbReference>
<dbReference type="GO" id="GO:1902430">
    <property type="term" value="P:negative regulation of amyloid-beta formation"/>
    <property type="evidence" value="ECO:0000250"/>
    <property type="project" value="Alzheimers_University_of_Toronto"/>
</dbReference>
<dbReference type="GO" id="GO:0045806">
    <property type="term" value="P:negative regulation of endocytosis"/>
    <property type="evidence" value="ECO:0000250"/>
    <property type="project" value="UniProtKB"/>
</dbReference>
<dbReference type="GO" id="GO:0043409">
    <property type="term" value="P:negative regulation of MAPK cascade"/>
    <property type="evidence" value="ECO:0000250"/>
    <property type="project" value="ARUK-UCL"/>
</dbReference>
<dbReference type="GO" id="GO:1903898">
    <property type="term" value="P:negative regulation of PERK-mediated unfolded protein response"/>
    <property type="evidence" value="ECO:0000250"/>
    <property type="project" value="ARUK-UCL"/>
</dbReference>
<dbReference type="GO" id="GO:0006909">
    <property type="term" value="P:phagocytosis"/>
    <property type="evidence" value="ECO:0007669"/>
    <property type="project" value="UniProtKB-KW"/>
</dbReference>
<dbReference type="GO" id="GO:0033700">
    <property type="term" value="P:phospholipid efflux"/>
    <property type="evidence" value="ECO:0000314"/>
    <property type="project" value="Alzheimers_University_of_Toronto"/>
</dbReference>
<dbReference type="GO" id="GO:0045332">
    <property type="term" value="P:phospholipid translocation"/>
    <property type="evidence" value="ECO:0000314"/>
    <property type="project" value="BHF-UCL"/>
</dbReference>
<dbReference type="GO" id="GO:0044857">
    <property type="term" value="P:plasma membrane raft organization"/>
    <property type="evidence" value="ECO:0000250"/>
    <property type="project" value="UniProtKB"/>
</dbReference>
<dbReference type="GO" id="GO:1900223">
    <property type="term" value="P:positive regulation of amyloid-beta clearance"/>
    <property type="evidence" value="ECO:0000250"/>
    <property type="project" value="Alzheimers_University_of_Toronto"/>
</dbReference>
<dbReference type="GO" id="GO:0010875">
    <property type="term" value="P:positive regulation of cholesterol efflux"/>
    <property type="evidence" value="ECO:0000250"/>
    <property type="project" value="Alzheimers_University_of_Toronto"/>
</dbReference>
<dbReference type="GO" id="GO:1901076">
    <property type="term" value="P:positive regulation of engulfment of apoptotic cell"/>
    <property type="evidence" value="ECO:0000250"/>
    <property type="project" value="Alzheimers_University_of_Toronto"/>
</dbReference>
<dbReference type="GO" id="GO:0070374">
    <property type="term" value="P:positive regulation of ERK1 and ERK2 cascade"/>
    <property type="evidence" value="ECO:0000250"/>
    <property type="project" value="Alzheimers_University_of_Toronto"/>
</dbReference>
<dbReference type="GO" id="GO:0050766">
    <property type="term" value="P:positive regulation of phagocytosis"/>
    <property type="evidence" value="ECO:0000250"/>
    <property type="project" value="Alzheimers_University_of_Toronto"/>
</dbReference>
<dbReference type="GO" id="GO:1902995">
    <property type="term" value="P:positive regulation of phospholipid efflux"/>
    <property type="evidence" value="ECO:0000250"/>
    <property type="project" value="Alzheimers_University_of_Toronto"/>
</dbReference>
<dbReference type="GO" id="GO:2000010">
    <property type="term" value="P:positive regulation of protein localization to cell surface"/>
    <property type="evidence" value="ECO:0000250"/>
    <property type="project" value="UniProtKB"/>
</dbReference>
<dbReference type="GO" id="GO:0034504">
    <property type="term" value="P:protein localization to nucleus"/>
    <property type="evidence" value="ECO:0000250"/>
    <property type="project" value="Alzheimers_University_of_Toronto"/>
</dbReference>
<dbReference type="GO" id="GO:1902991">
    <property type="term" value="P:regulation of amyloid precursor protein catabolic process"/>
    <property type="evidence" value="ECO:0000315"/>
    <property type="project" value="UniProtKB"/>
</dbReference>
<dbReference type="GO" id="GO:0019216">
    <property type="term" value="P:regulation of lipid metabolic process"/>
    <property type="evidence" value="ECO:0000250"/>
    <property type="project" value="ARUK-UCL"/>
</dbReference>
<dbReference type="GO" id="GO:0008542">
    <property type="term" value="P:visual learning"/>
    <property type="evidence" value="ECO:0000250"/>
    <property type="project" value="ARUK-UCL"/>
</dbReference>
<dbReference type="CDD" id="cd03263">
    <property type="entry name" value="ABC_subfamily_A"/>
    <property type="match status" value="2"/>
</dbReference>
<dbReference type="FunFam" id="3.40.50.300:FF:001235">
    <property type="entry name" value="ATP binding cassette subfamily A member 7"/>
    <property type="match status" value="1"/>
</dbReference>
<dbReference type="FunFam" id="3.40.50.300:FF:000511">
    <property type="entry name" value="ATP-binding cassette, sub-family A (ABC1), member 2"/>
    <property type="match status" value="1"/>
</dbReference>
<dbReference type="Gene3D" id="3.40.50.300">
    <property type="entry name" value="P-loop containing nucleotide triphosphate hydrolases"/>
    <property type="match status" value="2"/>
</dbReference>
<dbReference type="InterPro" id="IPR003593">
    <property type="entry name" value="AAA+_ATPase"/>
</dbReference>
<dbReference type="InterPro" id="IPR013525">
    <property type="entry name" value="ABC2_TM"/>
</dbReference>
<dbReference type="InterPro" id="IPR003439">
    <property type="entry name" value="ABC_transporter-like_ATP-bd"/>
</dbReference>
<dbReference type="InterPro" id="IPR017871">
    <property type="entry name" value="ABC_transporter-like_CS"/>
</dbReference>
<dbReference type="InterPro" id="IPR026082">
    <property type="entry name" value="ABCA"/>
</dbReference>
<dbReference type="InterPro" id="IPR027417">
    <property type="entry name" value="P-loop_NTPase"/>
</dbReference>
<dbReference type="InterPro" id="IPR056264">
    <property type="entry name" value="R2_ABCA1-4-like"/>
</dbReference>
<dbReference type="PANTHER" id="PTHR19229:SF250">
    <property type="entry name" value="ABC TRANSPORTER DOMAIN-CONTAINING PROTEIN-RELATED"/>
    <property type="match status" value="1"/>
</dbReference>
<dbReference type="PANTHER" id="PTHR19229">
    <property type="entry name" value="ATP-BINDING CASSETTE TRANSPORTER SUBFAMILY A ABCA"/>
    <property type="match status" value="1"/>
</dbReference>
<dbReference type="Pfam" id="PF12698">
    <property type="entry name" value="ABC2_membrane_3"/>
    <property type="match status" value="2"/>
</dbReference>
<dbReference type="Pfam" id="PF00005">
    <property type="entry name" value="ABC_tran"/>
    <property type="match status" value="2"/>
</dbReference>
<dbReference type="Pfam" id="PF23321">
    <property type="entry name" value="R1_ABCA1"/>
    <property type="match status" value="1"/>
</dbReference>
<dbReference type="SMART" id="SM00382">
    <property type="entry name" value="AAA"/>
    <property type="match status" value="2"/>
</dbReference>
<dbReference type="SUPFAM" id="SSF52540">
    <property type="entry name" value="P-loop containing nucleoside triphosphate hydrolases"/>
    <property type="match status" value="2"/>
</dbReference>
<dbReference type="PROSITE" id="PS00211">
    <property type="entry name" value="ABC_TRANSPORTER_1"/>
    <property type="match status" value="1"/>
</dbReference>
<dbReference type="PROSITE" id="PS50893">
    <property type="entry name" value="ABC_TRANSPORTER_2"/>
    <property type="match status" value="2"/>
</dbReference>
<proteinExistence type="evidence at protein level"/>
<accession>Q8IZY2</accession>
<accession>Q96S58</accession>
<accession>Q9BZC4</accession>
<accession>Q9NR73</accession>
<accession>Q9UKP8</accession>
<keyword id="KW-0002">3D-structure</keyword>
<keyword id="KW-0025">Alternative splicing</keyword>
<keyword id="KW-0026">Alzheimer disease</keyword>
<keyword id="KW-1008">Amyloidosis</keyword>
<keyword id="KW-0067">ATP-binding</keyword>
<keyword id="KW-1003">Cell membrane</keyword>
<keyword id="KW-0966">Cell projection</keyword>
<keyword id="KW-0963">Cytoplasm</keyword>
<keyword id="KW-1015">Disulfide bond</keyword>
<keyword id="KW-0256">Endoplasmic reticulum</keyword>
<keyword id="KW-0967">Endosome</keyword>
<keyword id="KW-0325">Glycoprotein</keyword>
<keyword id="KW-0333">Golgi apparatus</keyword>
<keyword id="KW-0445">Lipid transport</keyword>
<keyword id="KW-0472">Membrane</keyword>
<keyword id="KW-0523">Neurodegeneration</keyword>
<keyword id="KW-0547">Nucleotide-binding</keyword>
<keyword id="KW-0581">Phagocytosis</keyword>
<keyword id="KW-1267">Proteomics identification</keyword>
<keyword id="KW-1185">Reference proteome</keyword>
<keyword id="KW-0677">Repeat</keyword>
<keyword id="KW-1278">Translocase</keyword>
<keyword id="KW-0812">Transmembrane</keyword>
<keyword id="KW-1133">Transmembrane helix</keyword>
<keyword id="KW-0813">Transport</keyword>
<gene>
    <name evidence="26" type="primary">ABCA7</name>
</gene>
<feature type="chain" id="PRO_0000250674" description="Phospholipid-transporting ATPase ABCA7">
    <location>
        <begin position="1"/>
        <end position="2146"/>
    </location>
</feature>
<feature type="transmembrane region" description="Helical" evidence="3">
    <location>
        <begin position="22"/>
        <end position="42"/>
    </location>
</feature>
<feature type="topological domain" description="Extracellular" evidence="1">
    <location>
        <begin position="43"/>
        <end position="549"/>
    </location>
</feature>
<feature type="transmembrane region" description="Helical" evidence="3">
    <location>
        <begin position="550"/>
        <end position="570"/>
    </location>
</feature>
<feature type="transmembrane region" description="Helical" evidence="3">
    <location>
        <begin position="593"/>
        <end position="613"/>
    </location>
</feature>
<feature type="transmembrane region" description="Helical" evidence="3">
    <location>
        <begin position="626"/>
        <end position="646"/>
    </location>
</feature>
<feature type="transmembrane region" description="Helical" evidence="3">
    <location>
        <begin position="655"/>
        <end position="675"/>
    </location>
</feature>
<feature type="transmembrane region" description="Helical" evidence="3">
    <location>
        <begin position="687"/>
        <end position="707"/>
    </location>
</feature>
<feature type="transmembrane region" description="Helical" evidence="3">
    <location>
        <begin position="727"/>
        <end position="747"/>
    </location>
</feature>
<feature type="transmembrane region" description="Helical" evidence="3">
    <location>
        <begin position="849"/>
        <end position="869"/>
    </location>
</feature>
<feature type="transmembrane region" description="Helical" evidence="3">
    <location>
        <begin position="1243"/>
        <end position="1263"/>
    </location>
</feature>
<feature type="topological domain" description="Extracellular" evidence="1">
    <location>
        <begin position="1264"/>
        <end position="1537"/>
    </location>
</feature>
<feature type="transmembrane region" description="Helical" evidence="3">
    <location>
        <begin position="1538"/>
        <end position="1558"/>
    </location>
</feature>
<feature type="transmembrane region" description="Helical" evidence="3">
    <location>
        <begin position="1584"/>
        <end position="1604"/>
    </location>
</feature>
<feature type="transmembrane region" description="Helical" evidence="3">
    <location>
        <begin position="1621"/>
        <end position="1641"/>
    </location>
</feature>
<feature type="transmembrane region" description="Helical" evidence="3">
    <location>
        <begin position="1649"/>
        <end position="1669"/>
    </location>
</feature>
<feature type="transmembrane region" description="Helical" evidence="3">
    <location>
        <begin position="1683"/>
        <end position="1703"/>
    </location>
</feature>
<feature type="transmembrane region" description="Helical" evidence="3">
    <location>
        <begin position="1729"/>
        <end position="1749"/>
    </location>
</feature>
<feature type="domain" description="ABC transporter 1" evidence="4">
    <location>
        <begin position="807"/>
        <end position="1038"/>
    </location>
</feature>
<feature type="domain" description="ABC transporter 2" evidence="4">
    <location>
        <begin position="1793"/>
        <end position="2025"/>
    </location>
</feature>
<feature type="region of interest" description="Disordered" evidence="5">
    <location>
        <begin position="1048"/>
        <end position="1072"/>
    </location>
</feature>
<feature type="region of interest" description="Disordered" evidence="5">
    <location>
        <begin position="1185"/>
        <end position="1209"/>
    </location>
</feature>
<feature type="region of interest" description="Disordered" evidence="5">
    <location>
        <begin position="2104"/>
        <end position="2146"/>
    </location>
</feature>
<feature type="compositionally biased region" description="Basic and acidic residues" evidence="5">
    <location>
        <begin position="1048"/>
        <end position="1066"/>
    </location>
</feature>
<feature type="binding site" evidence="4">
    <location>
        <begin position="841"/>
        <end position="848"/>
    </location>
    <ligand>
        <name>ATP</name>
        <dbReference type="ChEBI" id="CHEBI:30616"/>
        <label>1</label>
    </ligand>
</feature>
<feature type="binding site" evidence="4">
    <location>
        <begin position="1827"/>
        <end position="1834"/>
    </location>
    <ligand>
        <name>ATP</name>
        <dbReference type="ChEBI" id="CHEBI:30616"/>
        <label>2</label>
    </ligand>
</feature>
<feature type="glycosylation site" description="N-linked (GlcNAc...) asparagine" evidence="3">
    <location>
        <position position="312"/>
    </location>
</feature>
<feature type="disulfide bond" evidence="1">
    <location>
        <begin position="75"/>
        <end position="225"/>
    </location>
</feature>
<feature type="disulfide bond" evidence="1">
    <location>
        <begin position="1345"/>
        <end position="1359"/>
    </location>
</feature>
<feature type="splice variant" id="VSP_020701" description="In isoform 2." evidence="22">
    <location>
        <begin position="1"/>
        <end position="138"/>
    </location>
</feature>
<feature type="splice variant" id="VSP_020702" description="In isoform 2." evidence="22">
    <original>AQPQPTKQSPLEPPMLDVAELLTSLLRT</original>
    <variation>MVCLGTGQSAGPLVSVQNHCPPCGLSPQ</variation>
    <location>
        <begin position="139"/>
        <end position="166"/>
    </location>
</feature>
<feature type="sequence variant" id="VAR_027581" description="In dbSNP:rs3764645." evidence="9 10">
    <original>E</original>
    <variation>G</variation>
    <location>
        <position position="188"/>
    </location>
</feature>
<feature type="sequence variant" id="VAR_027582" description="In dbSNP:rs3752232." evidence="10">
    <original>T</original>
    <variation>A</variation>
    <location>
        <position position="319"/>
    </location>
</feature>
<feature type="sequence variant" id="VAR_027583" description="In dbSNP:rs3764647." evidence="10">
    <original>H</original>
    <variation>R</variation>
    <location>
        <position position="395"/>
    </location>
</feature>
<feature type="sequence variant" id="VAR_027584" description="In dbSNP:rs3752233." evidence="10">
    <original>R</original>
    <variation>H</variation>
    <location>
        <position position="463"/>
    </location>
</feature>
<feature type="sequence variant" id="VAR_060985" description="In dbSNP:rs59851484.">
    <original>A</original>
    <variation>T</variation>
    <location>
        <position position="676"/>
    </location>
</feature>
<feature type="sequence variant" id="VAR_027585" description="In dbSNP:rs3752239." evidence="10">
    <original>N</original>
    <variation>T</variation>
    <location>
        <position position="718"/>
    </location>
</feature>
<feature type="sequence variant" id="VAR_081204" description="In AD9; dbSNP:rs143718918." evidence="20">
    <original>R</original>
    <variation>Q</variation>
    <location>
        <position position="880"/>
    </location>
</feature>
<feature type="sequence variant" id="VAR_027586" description="In dbSNP:rs3745842." evidence="6 8 10">
    <original>R</original>
    <variation>Q</variation>
    <location>
        <position position="1349"/>
    </location>
</feature>
<feature type="sequence variant" id="VAR_027587" description="In dbSNP:rs3752246." evidence="6 7 8 9">
    <original>G</original>
    <variation>A</variation>
    <location>
        <position position="1527"/>
    </location>
</feature>
<feature type="sequence variant" id="VAR_027588" description="In dbSNP:rs4147918." evidence="10">
    <original>Q</original>
    <variation>R</variation>
    <location>
        <position position="1686"/>
    </location>
</feature>
<feature type="sequence variant" id="VAR_027589" description="In dbSNP:rs4147934." evidence="6 8 9 10">
    <original>A</original>
    <variation>S</variation>
    <location>
        <position position="2045"/>
    </location>
</feature>
<feature type="sequence conflict" description="In Ref. 1; AAF85794 and 3; BAB62294." evidence="24" ref="1 3">
    <original>P</original>
    <variation>R</variation>
    <location>
        <position position="1503"/>
    </location>
</feature>
<feature type="sequence conflict" description="In Ref. 1; AAF85794, 2; AAN04657 and 3; BAB62294." evidence="24" ref="1 2 3">
    <original>S</original>
    <variation>F</variation>
    <location>
        <position position="1525"/>
    </location>
</feature>
<sequence>MAFWTQLMLLLWKNFMYRRRQPVQLLVELLWPLFLFFILVAVRHSHPPLEHHECHFPNKPLPSAGTVPWLQGLICNVNNTCFPQLTPGEEPGRLSNFNDSLVSRLLADARTVLGGASAHRTLAGLGKLIATLRAARSTAQPQPTKQSPLEPPMLDVAELLTSLLRTESLGLALGQAQEPLHSLLEAAEDLAQELLALRSLVELRALLQRPRGTSGPLELLSEALCSVRGPSSTVGPSLNWYEASDLMELVGQEPESALPDSSLSPACSELIGALDSHPLSRLLWRRLKPLILGKLLFAPDTPFTRKLMAQVNRTFEELTLLRDVREVWEMLGPRIFTFMNDSSNVAMLQRLLQMQDEGRRQPRPGGRDHMEALRSFLDPGSGGYSWQDAHADVGHLVGTLGRVTECLSLDKLEAAPSEAALVSRALQLLAEHRFWAGVVFLGPEDSSDPTEHPTPDLGPGHVRIKIRMDIDVVTRTNKIRDRFWDPGPAADPLTDLRYVWGGFVYLQDLVERAAVRVLSGANPRAGLYLQQMPYPCYVDDVFLRVLSRSLPLFLTLAWIYSVTLTVKAVVREKETRLRDTMRAMGLSRAVLWLGWFLSCLGPFLLSAALLVLVLKLGDILPYSHPGVVFLFLAAFAVATVTQSFLLSAFFSRANLAAACGGLAYFSLYLPYVLCVAWRDRLPAGGRVAASLLSPVAFGFGCESLALLEEQGEGAQWHNVGTRPTADVFSLAQVSGLLLLDAALYGLATWYLEAVCPGQYGIPEPWNFPFRRSYWCGPRPPKSPAPCPTPLDPKVLVEEAPPGLSPGVSVRSLEKRFPGSPQPALRGLSLDFYQGHITAFLGHNGAGKTTTLSILSGLFPPSGGSAFILGHDVRSSMAAIRPHLGVCPQYNVLFDMLTVDEHVWFYGRLKGLSAAVVGPEQDRLLQDVGLVSKQSVQTRHLSGGMQRKLSVAIAFVGGSQVVILDEPTAGVDPASRRGIWELLLKYREGRTLILSTHHLDEAELLGDRVAVVAGGRLCCCGSPLFLRRHLGSGYYLTLVKARLPLTTNEKADTDMEGSVDTRQEKKNGSQGSRVGTPQLLALVQHWVPGARLVEELPHELVLVLPYTGAHDGSFATLFRELDTRLAELRLTGYGISDTSLEEIFLKVVEECAADTDMEDGSCGQHLCTGIAGLDVTLRLKMPPQETALENGEPAGSAPETDQGSGPDAVGRVQGWALTRQQLQALLLKRFLLARRSRRGLFAQIVLPALFVGLALVFSLIVPPFGHYPALRLSPTMYGAQVSFFSEDAPGDPGRARLLEALLQEAGLEEPPVQHSSHRFSAPEVPAEVAKVLASGNWTPESPSPACQCSRPGARRLLPDCPAAAGGPPPPQAVTGSGEVVQNLTGRNLSDFLVKTYPRLVRQGLKTKKWVNEVRYGGFSLGGRDPGLPSGQELGRSVEELWALLSPLPGGALDRVLKNLTAWAHSLDAQDSLKIWFNNKGWHSMVAFVNRASNAILRAHLPPGPARHAHSITTLNHPLNLTKEQLSEGALMASSVDVLVSICVVFAMSFVPASFTLVLIEERVTRAKHLQLMGGLSPTLYWLGNFLWDMCNYLVPACIVVLIFLAFQQRAYVAPANLPALLLLLLLYGWSITPLMYPASFFFSVPSTAYVVLTCINLFIGINGSMATFVLELFSDQKLQEVSRILKQVFLIFPHFCLGRGLIDMVRNQAMADAFERLGDRQFQSPLRWEVVGKNLLAMVIQGPLFLLFTLLLQHRSQLLPQPRVRSLPLLGEEDEDVARERERVVQGATQGDVLVLRNLTKVYRGQRMPAVDRLCLGIPPGECFGLLGVNGAGKTSTFRMVTGDTLASRGEAVLAGHSVAREPSAAHLSMGYCPQSDAIFELLTGREHLELLARLRGVPEAQVAQTAGSGLARLGLSWYADRPAGTYSGGNKRKLATALALVGDPAVVFLDEPTTGMDPSARRFLWNSLLAVVREGRSVMLTSHSMEECEALCSRLAIMVNGRFRCLGSPQHLKGRFAAGHTLTLRVPAARSQPAAAFVAAEFPGAELREAHGGRLRFQLPPGGRCALARVFGELAVHGAEHGVEDFSVSQTMLEEVFLYFSKDQGKDEDTEEQKEAGVGVDPAPGLQHPKRVSQFLDDPSTAETVL</sequence>
<reference key="1">
    <citation type="journal article" date="2000" name="Biochem. Biophys. Res. Commun.">
        <title>Identification of a novel human sterol-sensitive ATP-binding cassette transporter (ABCA7).</title>
        <authorList>
            <person name="Kaminski W.E."/>
            <person name="Orso E."/>
            <person name="Diederich W."/>
            <person name="Klucken J."/>
            <person name="Drobnik W."/>
            <person name="Schmitz G."/>
        </authorList>
    </citation>
    <scope>NUCLEOTIDE SEQUENCE [MRNA] (ISOFORM 1)</scope>
    <scope>VARIANTS GLN-1349; ALA-1527 AND SER-2045</scope>
    <scope>TISSUE SPECIFICITY</scope>
    <scope>DEVELOPMENTAL STAGE</scope>
    <scope>INDUCTION</scope>
    <source>
        <tissue>Macrophage</tissue>
    </source>
</reference>
<reference key="2">
    <citation type="journal article" date="2000" name="Biochem. Biophys. Res. Commun.">
        <title>Genomic organization of the human cholesterol-responsive ABC transporter ABCA7: tandem linkage with the minor histocompatibility antigen HA-1 gene.</title>
        <authorList>
            <person name="Kaminski W.E."/>
            <person name="Piehler A."/>
            <person name="Schmitz G."/>
        </authorList>
    </citation>
    <scope>NUCLEOTIDE SEQUENCE [GENOMIC DNA]</scope>
    <scope>VARIANT ALA-1527</scope>
</reference>
<reference key="3">
    <citation type="journal article" date="2001" name="Biochem. Biophys. Res. Commun.">
        <title>Human ABCA1 contains a large amino-terminal extracellular domain homologous to an epitope of Sjogren's Syndrome.</title>
        <authorList>
            <person name="Tanaka A.R."/>
            <person name="Ikeda Y."/>
            <person name="Abe-Dohmae S."/>
            <person name="Arakawa R."/>
            <person name="Sadanami K."/>
            <person name="Kidera A."/>
            <person name="Nakagawa S."/>
            <person name="Nagase T."/>
            <person name="Aoki R."/>
            <person name="Kioka N."/>
            <person name="Amachi T."/>
            <person name="Yokoyama S."/>
            <person name="Ueda K."/>
        </authorList>
    </citation>
    <scope>NUCLEOTIDE SEQUENCE [MRNA] (ISOFORM 2)</scope>
    <scope>VARIANTS GLN-1349; ALA-1527 AND SER-2045</scope>
    <source>
        <tissue>Thymus</tissue>
    </source>
</reference>
<reference key="4">
    <citation type="journal article" date="2001" name="Cytogenet. Cell Genet.">
        <title>Comparative analysis of the promoter structure and genomic organization of the human and mouse ABCA7 gene encoding a novel ABCA transporter.</title>
        <authorList>
            <person name="Broccardo C."/>
            <person name="Osorio J."/>
            <person name="Luciani M.-F."/>
            <person name="Schriml L.M."/>
            <person name="Prades C."/>
            <person name="Shulenin S."/>
            <person name="Arnould I."/>
            <person name="Naudin L."/>
            <person name="Lafargue C."/>
            <person name="Rosier M."/>
            <person name="Jordan B."/>
            <person name="Mattei M.-G."/>
            <person name="Dean M."/>
            <person name="Denefle P."/>
            <person name="Chimini G."/>
        </authorList>
    </citation>
    <scope>NUCLEOTIDE SEQUENCE [MRNA] (ISOFORM 1)</scope>
    <scope>VARIANTS GLY-188; ALA-1527 AND SER-2045</scope>
    <scope>TISSUE SPECIFICITY</scope>
    <scope>DEVELOPMENTAL STAGE</scope>
    <source>
        <tissue>Spleen</tissue>
    </source>
</reference>
<reference key="5">
    <citation type="journal article" date="2004" name="Nature">
        <title>The DNA sequence and biology of human chromosome 19.</title>
        <authorList>
            <person name="Grimwood J."/>
            <person name="Gordon L.A."/>
            <person name="Olsen A.S."/>
            <person name="Terry A."/>
            <person name="Schmutz J."/>
            <person name="Lamerdin J.E."/>
            <person name="Hellsten U."/>
            <person name="Goodstein D."/>
            <person name="Couronne O."/>
            <person name="Tran-Gyamfi M."/>
            <person name="Aerts A."/>
            <person name="Altherr M."/>
            <person name="Ashworth L."/>
            <person name="Bajorek E."/>
            <person name="Black S."/>
            <person name="Branscomb E."/>
            <person name="Caenepeel S."/>
            <person name="Carrano A.V."/>
            <person name="Caoile C."/>
            <person name="Chan Y.M."/>
            <person name="Christensen M."/>
            <person name="Cleland C.A."/>
            <person name="Copeland A."/>
            <person name="Dalin E."/>
            <person name="Dehal P."/>
            <person name="Denys M."/>
            <person name="Detter J.C."/>
            <person name="Escobar J."/>
            <person name="Flowers D."/>
            <person name="Fotopulos D."/>
            <person name="Garcia C."/>
            <person name="Georgescu A.M."/>
            <person name="Glavina T."/>
            <person name="Gomez M."/>
            <person name="Gonzales E."/>
            <person name="Groza M."/>
            <person name="Hammon N."/>
            <person name="Hawkins T."/>
            <person name="Haydu L."/>
            <person name="Ho I."/>
            <person name="Huang W."/>
            <person name="Israni S."/>
            <person name="Jett J."/>
            <person name="Kadner K."/>
            <person name="Kimball H."/>
            <person name="Kobayashi A."/>
            <person name="Larionov V."/>
            <person name="Leem S.-H."/>
            <person name="Lopez F."/>
            <person name="Lou Y."/>
            <person name="Lowry S."/>
            <person name="Malfatti S."/>
            <person name="Martinez D."/>
            <person name="McCready P.M."/>
            <person name="Medina C."/>
            <person name="Morgan J."/>
            <person name="Nelson K."/>
            <person name="Nolan M."/>
            <person name="Ovcharenko I."/>
            <person name="Pitluck S."/>
            <person name="Pollard M."/>
            <person name="Popkie A.P."/>
            <person name="Predki P."/>
            <person name="Quan G."/>
            <person name="Ramirez L."/>
            <person name="Rash S."/>
            <person name="Retterer J."/>
            <person name="Rodriguez A."/>
            <person name="Rogers S."/>
            <person name="Salamov A."/>
            <person name="Salazar A."/>
            <person name="She X."/>
            <person name="Smith D."/>
            <person name="Slezak T."/>
            <person name="Solovyev V."/>
            <person name="Thayer N."/>
            <person name="Tice H."/>
            <person name="Tsai M."/>
            <person name="Ustaszewska A."/>
            <person name="Vo N."/>
            <person name="Wagner M."/>
            <person name="Wheeler J."/>
            <person name="Wu K."/>
            <person name="Xie G."/>
            <person name="Yang J."/>
            <person name="Dubchak I."/>
            <person name="Furey T.S."/>
            <person name="DeJong P."/>
            <person name="Dickson M."/>
            <person name="Gordon D."/>
            <person name="Eichler E.E."/>
            <person name="Pennacchio L.A."/>
            <person name="Richardson P."/>
            <person name="Stubbs L."/>
            <person name="Rokhsar D.S."/>
            <person name="Myers R.M."/>
            <person name="Rubin E.M."/>
            <person name="Lucas S.M."/>
        </authorList>
    </citation>
    <scope>NUCLEOTIDE SEQUENCE [LARGE SCALE GENOMIC DNA]</scope>
</reference>
<reference key="6">
    <citation type="submission" date="1999-04" db="EMBL/GenBank/DDBJ databases">
        <title>Isolation of autoantigen cDNAs by lambda phage surface display.</title>
        <authorList>
            <person name="Niwa M."/>
            <person name="Maruyama M."/>
            <person name="Fujimoto T."/>
            <person name="Dohi K."/>
            <person name="Maruyama I.N."/>
        </authorList>
    </citation>
    <scope>NUCLEOTIDE SEQUENCE [MRNA] OF 195-352 (ISOFORMS 1/2)</scope>
    <source>
        <tissue>Cervix carcinoma</tissue>
    </source>
</reference>
<reference key="7">
    <citation type="journal article" date="2003" name="Biochem. Biophys. Res. Commun.">
        <title>Posttranscriptional regulation of human ABCA7 and its function for the apoA-I-dependent lipid release.</title>
        <authorList>
            <person name="Ikeda Y."/>
            <person name="Abe-Dohmae S."/>
            <person name="Munehira Y."/>
            <person name="Aoki R."/>
            <person name="Kawamoto S."/>
            <person name="Furuya A."/>
            <person name="Shitara K."/>
            <person name="Amachi T."/>
            <person name="Kioka N."/>
            <person name="Matsuo M."/>
            <person name="Yokoyama S."/>
            <person name="Ueda K."/>
        </authorList>
    </citation>
    <scope>FUNCTION</scope>
    <scope>TISSUE SPECIFICITY</scope>
    <scope>SUBCELLULAR LOCATION</scope>
</reference>
<reference key="8">
    <citation type="journal article" date="2003" name="J. Biol. Chem.">
        <title>ATP-binding cassette transporter A7 (ABCA7) binds apolipoprotein A-I and mediates cellular phospholipid but not cholesterol efflux.</title>
        <authorList>
            <person name="Wang N."/>
            <person name="Lan D."/>
            <person name="Gerbod-Giannone M."/>
            <person name="Linsel-Nitschke P."/>
            <person name="Jehle A.W."/>
            <person name="Chen W."/>
            <person name="Martinez L.O."/>
            <person name="Tall A.R."/>
        </authorList>
    </citation>
    <scope>FUNCTION</scope>
    <scope>SUBCELLULAR LOCATION</scope>
</reference>
<reference key="9">
    <citation type="journal article" date="2003" name="J. Invest. Dermatol.">
        <title>Adenosine triphosphate binding cassette (ABC) transporters are expressed and regulated during terminal keratinocyte differentiation: a potential role for ABCA7 in epidermal lipid reorganization.</title>
        <authorList>
            <person name="Kielar D."/>
            <person name="Kaminski W.E."/>
            <person name="Liebisch G."/>
            <person name="Piehler A."/>
            <person name="Wenzel J.J."/>
            <person name="Moehle C."/>
            <person name="Heimerl S."/>
            <person name="Langmann T."/>
            <person name="Friedrich S.O."/>
            <person name="Boettcher A."/>
            <person name="Barlage S."/>
            <person name="Drobnik W."/>
            <person name="Schmitz G."/>
        </authorList>
    </citation>
    <scope>FUNCTION</scope>
    <scope>INDUCTION</scope>
</reference>
<reference key="10">
    <citation type="journal article" date="2004" name="J. Biol. Chem.">
        <title>Human ABCA7 supports apolipoprotein-mediated release of cellular cholesterol and phospholipid to generate high density lipoprotein.</title>
        <authorList>
            <person name="Abe-Dohmae S."/>
            <person name="Ikeda Y."/>
            <person name="Matsuo M."/>
            <person name="Hayashi M."/>
            <person name="Okuhira K."/>
            <person name="Ueda K."/>
            <person name="Yokoyama S."/>
        </authorList>
    </citation>
    <scope>FUNCTION</scope>
    <scope>SUBCELLULAR LOCATION</scope>
</reference>
<reference key="11">
    <citation type="journal article" date="2013" name="J. Biol. Chem.">
        <title>Differential phospholipid substrates and directional transport by ATP-binding cassette proteins ABCA1, ABCA7, and ABCA4 and disease-causing mutants.</title>
        <authorList>
            <person name="Quazi F."/>
            <person name="Molday R.S."/>
        </authorList>
    </citation>
    <scope>CATALYTIC ACTIVITY</scope>
    <scope>ACTIVITY REGULATION</scope>
    <scope>FUNCTION</scope>
</reference>
<reference key="12">
    <citation type="journal article" date="2015" name="J. Biol. Chem.">
        <title>ATP-binding cassette transporter A7 (ABCA7) loss of function alters Alzheimer amyloid processing.</title>
        <authorList>
            <person name="Satoh K."/>
            <person name="Abe-Dohmae S."/>
            <person name="Yokoyama S."/>
            <person name="St George-Hyslop P."/>
            <person name="Fraser P.E."/>
        </authorList>
    </citation>
    <scope>FUNCTION</scope>
</reference>
<reference key="13">
    <citation type="journal article" date="2015" name="Lancet Neurol.">
        <title>Mutations in ABCA7 in a Belgian cohort of Alzheimer's disease patients: a targeted resequencing study.</title>
        <authorList>
            <person name="Cuyvers E."/>
            <person name="De Roeck A."/>
            <person name="Van den Bossche T."/>
            <person name="Van Cauwenberghe C."/>
            <person name="Bettens K."/>
            <person name="Vermeulen S."/>
            <person name="Mattheijssens M."/>
            <person name="Peeters K."/>
            <person name="Engelborghs S."/>
            <person name="Vandenbulcke M."/>
            <person name="Vandenberghe R."/>
            <person name="De Deyn P.P."/>
            <person name="Van Broeckhoven C."/>
            <person name="Sleegers K."/>
        </authorList>
    </citation>
    <scope>INVOLVEMENT IN AD9</scope>
</reference>
<reference key="14">
    <citation type="journal article" date="2015" name="Nat. Genet.">
        <title>Loss-of-function variants in ABCA7 confer risk of Alzheimer's disease.</title>
        <authorList>
            <consortium name="DemGene"/>
            <person name="Steinberg S."/>
            <person name="Stefansson H."/>
            <person name="Jonsson T."/>
            <person name="Johannsdottir H."/>
            <person name="Ingason A."/>
            <person name="Helgason H."/>
            <person name="Sulem P."/>
            <person name="Magnusson O.T."/>
            <person name="Gudjonsson S.A."/>
            <person name="Unnsteinsdottir U."/>
            <person name="Kong A."/>
            <person name="Helisalmi S."/>
            <person name="Soininen H."/>
            <person name="Lah J.J."/>
            <person name="Aarsland D."/>
            <person name="Fladby T."/>
            <person name="Ulstein I.D."/>
            <person name="Djurovic S."/>
            <person name="Sando S.B."/>
            <person name="White L.R."/>
            <person name="Knudsen G.P."/>
            <person name="Westlye L.T."/>
            <person name="Selbaek G."/>
            <person name="Giegling I."/>
            <person name="Hampel H."/>
            <person name="Hiltunen M."/>
            <person name="Levey A.I."/>
            <person name="Andreassen O.A."/>
            <person name="Rujescu D."/>
            <person name="Jonsson P.V."/>
            <person name="Bjornsson S."/>
            <person name="Snaedal J."/>
            <person name="Stefansson K."/>
        </authorList>
    </citation>
    <scope>INVOLVEMENT IN AD9</scope>
</reference>
<reference key="15">
    <citation type="journal article" date="2016" name="J. Alzheimers Dis.">
        <title>ABCA7 Mediates Phagocytic Clearance of Amyloid-beta in the Brain.</title>
        <authorList>
            <person name="Fu Y."/>
            <person name="Hsiao J.H."/>
            <person name="Paxinos G."/>
            <person name="Halliday G.M."/>
            <person name="Kim W.S."/>
        </authorList>
    </citation>
    <scope>TISSUE SPECIFICITY</scope>
</reference>
<reference key="16">
    <citation type="journal article" date="2002" name="J. Hum. Genet.">
        <title>Catalog of 605 single-nucleotide polymorphisms (SNPs) among 13 genes encoding human ATP-binding cassette transporters: ABCA4, ABCA7, ABCA8, ABCD1, ABCD3, ABCD4, ABCE1, ABCF1, ABCG1, ABCG2, ABCG4, ABCG5, and ABCG8.</title>
        <authorList>
            <person name="Iida A."/>
            <person name="Saito S."/>
            <person name="Sekine A."/>
            <person name="Mishima C."/>
            <person name="Kitamura Y."/>
            <person name="Kondo K."/>
            <person name="Harigae S."/>
            <person name="Osawa S."/>
            <person name="Nakamura Y."/>
        </authorList>
    </citation>
    <scope>VARIANTS GLY-188; ALA-319; ARG-395; HIS-463; THR-718; GLN-1349; ARG-1686 AND SER-2045</scope>
</reference>
<reference key="17">
    <citation type="journal article" date="2018" name="Neurol. Genet.">
        <title>Rare ABCA7 variants in 2 German families with Alzheimer disease.</title>
        <authorList>
            <person name="May P."/>
            <person name="Pichler S."/>
            <person name="Hartl D."/>
            <person name="Bobbili D.R."/>
            <person name="Mayhaus M."/>
            <person name="Spaniol C."/>
            <person name="Kurz A."/>
            <person name="Balling R."/>
            <person name="Schneider J.G."/>
            <person name="Riemenschneider M."/>
        </authorList>
    </citation>
    <scope>VARIANT AD9 GLN-880</scope>
</reference>
<name>ABCA7_HUMAN</name>
<comment type="function">
    <text evidence="2 11 12 13 14 15 18">Catalyzes the translocation of specific phospholipids from the cytoplasmic to the extracellular/lumenal leaflet of membrane coupled to the hydrolysis of ATP (PubMed:24097981). Transports preferentially phosphatidylserine over phosphatidylcholine (PubMed:24097981). Plays a role in lipid homeostasis and macrophage-mediated phagocytosis (PubMed:12917409, PubMed:12925201, PubMed:14570867, PubMed:14592415). Binds APOA1 and may function in apolipoprotein-mediated phospholipid efflux from cells (PubMed:12917409, PubMed:14570867, PubMed:14592415). May also mediate cholesterol efflux (PubMed:14570867). May regulate cellular ceramide homeostasis during keratinocyte differentiation (PubMed:12925201). Involved in lipid raft organization and CD1D localization on thymocytes and antigen-presenting cells, which plays an important role in natural killer T-cell development and activation (By similarity). Plays a role in phagocytosis of apoptotic cells by macrophages (By similarity). Macrophage phagocytosis is stimulated by APOA1 or APOA2, probably by stabilization of ABCA7 (By similarity). Also involved in phagocytic clearance of amyloid-beta by microglia cells and macrophages (By similarity). Further limits amyloid-beta production by playing a role in the regulation of amyloid-beta A4 precursor protein (APP) endocytosis and/or processing (PubMed:26260791). Amyloid-beta is the main component of amyloid plaques found in the brains of Alzheimer patients (PubMed:26260791).</text>
</comment>
<comment type="catalytic activity">
    <reaction evidence="15">
        <text>ATP + H2O + phospholipidSide 1 = ADP + phosphate + phospholipidSide 2.</text>
        <dbReference type="EC" id="7.6.2.1"/>
    </reaction>
</comment>
<comment type="catalytic activity">
    <reaction evidence="15">
        <text>a 1,2-diacyl-sn-glycero-3-phosphocholine(out) + ATP + H2O = a 1,2-diacyl-sn-glycero-3-phosphocholine(in) + ADP + phosphate + H(+)</text>
        <dbReference type="Rhea" id="RHEA:38583"/>
        <dbReference type="ChEBI" id="CHEBI:15377"/>
        <dbReference type="ChEBI" id="CHEBI:15378"/>
        <dbReference type="ChEBI" id="CHEBI:30616"/>
        <dbReference type="ChEBI" id="CHEBI:43474"/>
        <dbReference type="ChEBI" id="CHEBI:57643"/>
        <dbReference type="ChEBI" id="CHEBI:456216"/>
    </reaction>
    <physiologicalReaction direction="left-to-right" evidence="25">
        <dbReference type="Rhea" id="RHEA:38584"/>
    </physiologicalReaction>
</comment>
<comment type="catalytic activity">
    <reaction evidence="15">
        <text>a 1,2-diacyl-sn-glycero-3-phospho-L-serine(out) + ATP + H2O = a 1,2-diacyl-sn-glycero-3-phospho-L-serine(in) + ADP + phosphate + H(+)</text>
        <dbReference type="Rhea" id="RHEA:38567"/>
        <dbReference type="ChEBI" id="CHEBI:15377"/>
        <dbReference type="ChEBI" id="CHEBI:15378"/>
        <dbReference type="ChEBI" id="CHEBI:30616"/>
        <dbReference type="ChEBI" id="CHEBI:43474"/>
        <dbReference type="ChEBI" id="CHEBI:57262"/>
        <dbReference type="ChEBI" id="CHEBI:456216"/>
    </reaction>
    <physiologicalReaction direction="left-to-right" evidence="25">
        <dbReference type="Rhea" id="RHEA:38568"/>
    </physiologicalReaction>
</comment>
<comment type="activity regulation">
    <text evidence="15">ATPase activity is decreased by cholesterol and ceramide. ATPase activity is stimulated by phosphatidylserine, phosphatidylcholine and sphingomyelin, but phosphatidylserine is more effective.</text>
</comment>
<comment type="subcellular location">
    <subcellularLocation>
        <location evidence="11 14">Cell membrane</location>
        <topology evidence="3">Multi-pass membrane protein</topology>
    </subcellularLocation>
    <subcellularLocation>
        <location evidence="2">Golgi apparatus membrane</location>
        <topology evidence="3">Multi-pass membrane protein</topology>
    </subcellularLocation>
    <subcellularLocation>
        <location evidence="2">Early endosome membrane</location>
        <topology evidence="3">Multi-pass membrane protein</topology>
    </subcellularLocation>
    <subcellularLocation>
        <location evidence="2">Cytoplasm</location>
    </subcellularLocation>
    <subcellularLocation>
        <location evidence="2">Cell projection</location>
        <location evidence="2">Ruffle membrane</location>
    </subcellularLocation>
    <subcellularLocation>
        <location evidence="2">Cell projection</location>
        <location evidence="2">Phagocytic cup</location>
    </subcellularLocation>
    <text evidence="2">Localizes to cell membrane ruffles and phagocytic cups of macrophages stimulated with C1q or apoptotic cells. Localizes to the cytoplasm of resting macrophages, probably in Golgi and endosomes. Localizes to the apical brush border of cells in the proximal tubules of kidney (By similarity).</text>
</comment>
<comment type="subcellular location">
    <molecule>Isoform 2</molecule>
    <subcellularLocation>
        <location evidence="14">Cytoplasm</location>
    </subcellularLocation>
    <subcellularLocation>
        <location evidence="14">Endoplasmic reticulum</location>
    </subcellularLocation>
    <text evidence="14">May localize to the endoplasmic reticulum.</text>
</comment>
<comment type="alternative products">
    <event type="alternative splicing"/>
    <isoform>
        <id>Q8IZY2-1</id>
        <name>1</name>
        <name>Type 1</name>
        <sequence type="displayed"/>
    </isoform>
    <isoform>
        <id>Q8IZY2-2</id>
        <name>2</name>
        <name>Type 2</name>
        <sequence type="described" ref="VSP_020701 VSP_020702"/>
    </isoform>
</comment>
<comment type="tissue specificity">
    <text evidence="6 9 14 19">Expressed in leukocytes (at protein level) (PubMed:10873640). Widely expressed (PubMed:10873640). Highly expressed in myelo-lymphatic tissues including peripheral leukocytes, thymus, spleen and bone marrow (PubMed:10873640, PubMed:11435699). Expressed in the hippocampus and the cerebellum (PubMed:27472885). Isoform 2: Abundant in lymph node, spleen, thymus and trachea (PubMed:14592415). Isoform 1: Strongly expressed in brain and bone marrow (PubMed:14592415).</text>
</comment>
<comment type="developmental stage">
    <text evidence="6 9">Expressed in fetal tissues. Strongly expressed in fetal liver.</text>
</comment>
<comment type="induction">
    <text evidence="6 12">Up-regulated in macrophages upon cholesterol uptake and inversely regulated upon cholesterol deloading from the cells (at protein level). Up-regulated in keratinocytes during terminal differentiation.</text>
</comment>
<comment type="PTM">
    <text evidence="2">N-glycosylated.</text>
</comment>
<comment type="disease" evidence="16 17 20">
    <disease id="DI-04711">
        <name>Alzheimer disease 9</name>
        <acronym>AD9</acronym>
        <description>A familial, late-onset form of Alzheimer disease. Alzheimer disease is a neurodegenerative disorder characterized by progressive dementia, loss of cognitive abilities, and deposition of fibrillar amyloid proteins as intraneuronal neurofibrillary tangles, extracellular amyloid plaques and vascular amyloid deposits. The major constituents of these plaques are neurotoxic amyloid-beta protein 40 and amyloid-beta protein 42, that are produced by the proteolysis of the transmembrane APP protein. The cytotoxic C-terminal fragments (CTFs) and the caspase-cleaved products, such as C31, are also implicated in neuronal death.</description>
        <dbReference type="MIM" id="608907"/>
    </disease>
    <text>Disease susceptibility is associated with variants affecting the gene represented in this entry.</text>
</comment>
<comment type="miscellaneous">
    <molecule>Isoform 2</molecule>
    <text evidence="24">Inactive for apoA-I-mediated lipid release.</text>
</comment>
<comment type="similarity">
    <text evidence="24">Belongs to the ABC transporter superfamily. ABCA family.</text>
</comment>
<comment type="caution">
    <text evidence="2 11 19">There are conflicting results concerning the role of ABCA7 in lipid transport. ABCA7 was described to play a role in apolipoprotein-mediated phospholipid and cholesterol efflux when expressed in HEK293 cells (PubMed:12917409, PubMed:27472885). However, another report shows that ABCA7 deficiency does not influence cholesterol and phospholipid efflux in mouse primary macrophages, but leads to lower serum HDL cholesterol levels and a reduction in fat mass in female mice (By similarity).</text>
</comment>
<comment type="online information" name="ABCMdb">
    <link uri="http://abcm2.hegelab.org/search"/>
    <text>Database for mutations in ABC proteins</text>
</comment>
<protein>
    <recommendedName>
        <fullName evidence="24">Phospholipid-transporting ATPase ABCA7</fullName>
        <ecNumber evidence="15">7.6.2.1</ecNumber>
    </recommendedName>
    <alternativeName>
        <fullName evidence="22">ABCA-SSN</fullName>
    </alternativeName>
    <alternativeName>
        <fullName evidence="24">ATP-binding cassette sub-family A member 7</fullName>
    </alternativeName>
    <alternativeName>
        <fullName evidence="23">Autoantigen SS-N</fullName>
    </alternativeName>
    <alternativeName>
        <fullName evidence="21">Macrophage ABC transporter</fullName>
    </alternativeName>
</protein>
<evidence type="ECO:0000250" key="1"/>
<evidence type="ECO:0000250" key="2">
    <source>
        <dbReference type="UniProtKB" id="Q91V24"/>
    </source>
</evidence>
<evidence type="ECO:0000255" key="3"/>
<evidence type="ECO:0000255" key="4">
    <source>
        <dbReference type="PROSITE-ProRule" id="PRU00434"/>
    </source>
</evidence>
<evidence type="ECO:0000256" key="5">
    <source>
        <dbReference type="SAM" id="MobiDB-lite"/>
    </source>
</evidence>
<evidence type="ECO:0000269" key="6">
    <source>
    </source>
</evidence>
<evidence type="ECO:0000269" key="7">
    <source>
    </source>
</evidence>
<evidence type="ECO:0000269" key="8">
    <source>
    </source>
</evidence>
<evidence type="ECO:0000269" key="9">
    <source>
    </source>
</evidence>
<evidence type="ECO:0000269" key="10">
    <source>
    </source>
</evidence>
<evidence type="ECO:0000269" key="11">
    <source>
    </source>
</evidence>
<evidence type="ECO:0000269" key="12">
    <source>
    </source>
</evidence>
<evidence type="ECO:0000269" key="13">
    <source>
    </source>
</evidence>
<evidence type="ECO:0000269" key="14">
    <source>
    </source>
</evidence>
<evidence type="ECO:0000269" key="15">
    <source>
    </source>
</evidence>
<evidence type="ECO:0000269" key="16">
    <source>
    </source>
</evidence>
<evidence type="ECO:0000269" key="17">
    <source>
    </source>
</evidence>
<evidence type="ECO:0000269" key="18">
    <source>
    </source>
</evidence>
<evidence type="ECO:0000269" key="19">
    <source>
    </source>
</evidence>
<evidence type="ECO:0000269" key="20">
    <source>
    </source>
</evidence>
<evidence type="ECO:0000303" key="21">
    <source>
    </source>
</evidence>
<evidence type="ECO:0000303" key="22">
    <source>
    </source>
</evidence>
<evidence type="ECO:0000303" key="23">
    <source ref="6"/>
</evidence>
<evidence type="ECO:0000305" key="24"/>
<evidence type="ECO:0000305" key="25">
    <source>
    </source>
</evidence>
<evidence type="ECO:0000312" key="26">
    <source>
        <dbReference type="HGNC" id="HGNC:37"/>
    </source>
</evidence>